<feature type="chain" id="PRO_0000082092" description="ATP synthase F(0) complex subunit a">
    <location>
        <begin position="1"/>
        <end position="226"/>
    </location>
</feature>
<feature type="transmembrane region" description="Helical" evidence="2">
    <location>
        <begin position="5"/>
        <end position="25"/>
    </location>
</feature>
<feature type="transmembrane region" description="Helical" evidence="2">
    <location>
        <begin position="68"/>
        <end position="88"/>
    </location>
</feature>
<feature type="transmembrane region" description="Helical" evidence="2">
    <location>
        <begin position="97"/>
        <end position="117"/>
    </location>
</feature>
<feature type="transmembrane region" description="Helical" evidence="2">
    <location>
        <begin position="136"/>
        <end position="156"/>
    </location>
</feature>
<feature type="transmembrane region" description="Helical" evidence="2">
    <location>
        <begin position="179"/>
        <end position="199"/>
    </location>
</feature>
<feature type="transmembrane region" description="Helical" evidence="2">
    <location>
        <begin position="201"/>
        <end position="221"/>
    </location>
</feature>
<organism>
    <name type="scientific">Balaenoptera musculus</name>
    <name type="common">Blue whale</name>
    <dbReference type="NCBI Taxonomy" id="9771"/>
    <lineage>
        <taxon>Eukaryota</taxon>
        <taxon>Metazoa</taxon>
        <taxon>Chordata</taxon>
        <taxon>Craniata</taxon>
        <taxon>Vertebrata</taxon>
        <taxon>Euteleostomi</taxon>
        <taxon>Mammalia</taxon>
        <taxon>Eutheria</taxon>
        <taxon>Laurasiatheria</taxon>
        <taxon>Artiodactyla</taxon>
        <taxon>Whippomorpha</taxon>
        <taxon>Cetacea</taxon>
        <taxon>Mysticeti</taxon>
        <taxon>Balaenopteridae</taxon>
        <taxon>Balaenoptera</taxon>
    </lineage>
</organism>
<comment type="function">
    <text evidence="1">Subunit a, of the mitochondrial membrane ATP synthase complex (F(1)F(0) ATP synthase or Complex V) that produces ATP from ADP in the presence of a proton gradient across the membrane which is generated by electron transport complexes of the respiratory chain. ATP synthase complex consist of a soluble F(1) head domain - the catalytic core - and a membrane F(1) domain - the membrane proton channel. These two domains are linked by a central stalk rotating inside the F(1) region and a stationary peripheral stalk. During catalysis, ATP synthesis in the catalytic domain of F(1) is coupled via a rotary mechanism of the central stalk subunits to proton translocation. With the subunit c (ATP5MC1), forms the proton-conducting channel in the F(0) domain, that contains two crucial half-channels (inlet and outlet) that facilitate proton movement from the mitochondrial intermembrane space (IMS) into the matrix. Protons are taken up via the inlet half-channel and released through the outlet half-channel, following a Grotthuss mechanism.</text>
</comment>
<comment type="catalytic activity">
    <reaction evidence="1">
        <text>H(+)(in) = H(+)(out)</text>
        <dbReference type="Rhea" id="RHEA:34979"/>
        <dbReference type="ChEBI" id="CHEBI:15378"/>
    </reaction>
</comment>
<comment type="subunit">
    <text evidence="1">Component of the ATP synthase complex composed at least of ATP5F1A/subunit alpha, ATP5F1B/subunit beta, ATP5MC1/subunit c (homooctomer), MT-ATP6/subunit a, MT-ATP8/subunit 8, ATP5ME/subunit e, ATP5MF/subunit f, ATP5MG/subunit g, ATP5MK/subunit k, ATP5MJ/subunit j, ATP5F1C/subunit gamma, ATP5F1D/subunit delta, ATP5F1E/subunit epsilon, ATP5PF/subunit F6, ATP5PB/subunit b, ATP5PD/subunit d, ATP5PO/subunit OSCP. ATP synthase complex consists of a soluble F(1) head domain (subunits alpha(3) and beta(3)) - the catalytic core - and a membrane F(0) domain - the membrane proton channel (subunits c, a, 8, e, f, g, k and j). These two domains are linked by a central stalk (subunits gamma, delta, and epsilon) rotating inside the F1 region and a stationary peripheral stalk (subunits F6, b, d, and OSCP). Interacts with DNAJC30; interaction is direct.</text>
</comment>
<comment type="subcellular location">
    <subcellularLocation>
        <location>Mitochondrion inner membrane</location>
        <topology>Multi-pass membrane protein</topology>
    </subcellularLocation>
</comment>
<comment type="similarity">
    <text evidence="3">Belongs to the ATPase A chain family.</text>
</comment>
<geneLocation type="mitochondrion"/>
<dbReference type="EMBL" id="X72204">
    <property type="protein sequence ID" value="CAA51000.1"/>
    <property type="molecule type" value="Genomic_DNA"/>
</dbReference>
<dbReference type="PIR" id="S41825">
    <property type="entry name" value="S41825"/>
</dbReference>
<dbReference type="RefSeq" id="NP_007061.1">
    <property type="nucleotide sequence ID" value="NC_001601.1"/>
</dbReference>
<dbReference type="SMR" id="P41291"/>
<dbReference type="GeneID" id="807740"/>
<dbReference type="KEGG" id="bmus:807740"/>
<dbReference type="CTD" id="4508"/>
<dbReference type="OrthoDB" id="5976622at2759"/>
<dbReference type="Proteomes" id="UP000694857">
    <property type="component" value="Mitochondrion MT"/>
</dbReference>
<dbReference type="GO" id="GO:0005743">
    <property type="term" value="C:mitochondrial inner membrane"/>
    <property type="evidence" value="ECO:0007669"/>
    <property type="project" value="UniProtKB-SubCell"/>
</dbReference>
<dbReference type="GO" id="GO:0045259">
    <property type="term" value="C:proton-transporting ATP synthase complex"/>
    <property type="evidence" value="ECO:0000250"/>
    <property type="project" value="UniProtKB"/>
</dbReference>
<dbReference type="GO" id="GO:0015252">
    <property type="term" value="F:proton channel activity"/>
    <property type="evidence" value="ECO:0000250"/>
    <property type="project" value="UniProtKB"/>
</dbReference>
<dbReference type="GO" id="GO:0046933">
    <property type="term" value="F:proton-transporting ATP synthase activity, rotational mechanism"/>
    <property type="evidence" value="ECO:0007669"/>
    <property type="project" value="TreeGrafter"/>
</dbReference>
<dbReference type="GO" id="GO:0015986">
    <property type="term" value="P:proton motive force-driven ATP synthesis"/>
    <property type="evidence" value="ECO:0000250"/>
    <property type="project" value="UniProtKB"/>
</dbReference>
<dbReference type="GO" id="GO:1902600">
    <property type="term" value="P:proton transmembrane transport"/>
    <property type="evidence" value="ECO:0000250"/>
    <property type="project" value="UniProtKB"/>
</dbReference>
<dbReference type="CDD" id="cd00310">
    <property type="entry name" value="ATP-synt_Fo_a_6"/>
    <property type="match status" value="1"/>
</dbReference>
<dbReference type="FunFam" id="1.20.120.220:FF:000004">
    <property type="entry name" value="ATP synthase subunit a"/>
    <property type="match status" value="1"/>
</dbReference>
<dbReference type="Gene3D" id="1.20.120.220">
    <property type="entry name" value="ATP synthase, F0 complex, subunit A"/>
    <property type="match status" value="1"/>
</dbReference>
<dbReference type="InterPro" id="IPR000568">
    <property type="entry name" value="ATP_synth_F0_asu"/>
</dbReference>
<dbReference type="InterPro" id="IPR023011">
    <property type="entry name" value="ATP_synth_F0_asu_AS"/>
</dbReference>
<dbReference type="InterPro" id="IPR045083">
    <property type="entry name" value="ATP_synth_F0_asu_bact/mt"/>
</dbReference>
<dbReference type="InterPro" id="IPR035908">
    <property type="entry name" value="F0_ATP_A_sf"/>
</dbReference>
<dbReference type="NCBIfam" id="TIGR01131">
    <property type="entry name" value="ATP_synt_6_or_A"/>
    <property type="match status" value="1"/>
</dbReference>
<dbReference type="PANTHER" id="PTHR11410">
    <property type="entry name" value="ATP SYNTHASE SUBUNIT A"/>
    <property type="match status" value="1"/>
</dbReference>
<dbReference type="PANTHER" id="PTHR11410:SF0">
    <property type="entry name" value="ATP SYNTHASE SUBUNIT A"/>
    <property type="match status" value="1"/>
</dbReference>
<dbReference type="Pfam" id="PF00119">
    <property type="entry name" value="ATP-synt_A"/>
    <property type="match status" value="1"/>
</dbReference>
<dbReference type="PRINTS" id="PR00123">
    <property type="entry name" value="ATPASEA"/>
</dbReference>
<dbReference type="SUPFAM" id="SSF81336">
    <property type="entry name" value="F1F0 ATP synthase subunit A"/>
    <property type="match status" value="1"/>
</dbReference>
<dbReference type="PROSITE" id="PS00449">
    <property type="entry name" value="ATPASE_A"/>
    <property type="match status" value="1"/>
</dbReference>
<protein>
    <recommendedName>
        <fullName evidence="1">ATP synthase F(0) complex subunit a</fullName>
    </recommendedName>
    <alternativeName>
        <fullName>F-ATPase protein 6</fullName>
    </alternativeName>
    <alternativeName>
        <fullName evidence="1">Proton-conducting channel, ATP synthase F(0) complex subunit a</fullName>
    </alternativeName>
</protein>
<gene>
    <name evidence="1" type="primary">MT-ATP6</name>
    <name type="synonym">ATP6</name>
    <name type="synonym">ATPASE6</name>
    <name type="synonym">MTATP6</name>
</gene>
<reference key="1">
    <citation type="journal article" date="1993" name="J. Mol. Evol.">
        <title>Comparison between the complete mtDNA sequences of the blue and the fin whale, two species that can hybridize in nature.</title>
        <authorList>
            <person name="Arnason U."/>
            <person name="Gullberg A."/>
        </authorList>
    </citation>
    <scope>NUCLEOTIDE SEQUENCE [GENOMIC DNA]</scope>
</reference>
<name>ATP6_BALMU</name>
<keyword id="KW-0066">ATP synthesis</keyword>
<keyword id="KW-0138">CF(0)</keyword>
<keyword id="KW-0375">Hydrogen ion transport</keyword>
<keyword id="KW-0406">Ion transport</keyword>
<keyword id="KW-0472">Membrane</keyword>
<keyword id="KW-0496">Mitochondrion</keyword>
<keyword id="KW-0999">Mitochondrion inner membrane</keyword>
<keyword id="KW-1185">Reference proteome</keyword>
<keyword id="KW-0812">Transmembrane</keyword>
<keyword id="KW-1133">Transmembrane helix</keyword>
<keyword id="KW-0813">Transport</keyword>
<sequence length="226" mass="24967">MNENLFAPFMIPVMLGIPITTLIIILPSILFPAPNRLINNRTISIQQWLTKLTSKQLMSVHSPKGQTWSLMLISLFLFIASTNLLGMLPHSFTPTTQLSMNVGMAIPLWAGTVATGFRNKTKMSLAHLLPQGTPTFLIPMLVIIETISLFIQPVALAVRLTANITAGHLLMHLIGETTLVLMSTSLFTAIITFTILALLTILEFRVALIQAYVFTLLVSLYLHDNT</sequence>
<evidence type="ECO:0000250" key="1">
    <source>
        <dbReference type="UniProtKB" id="P00846"/>
    </source>
</evidence>
<evidence type="ECO:0000255" key="2"/>
<evidence type="ECO:0000305" key="3"/>
<proteinExistence type="inferred from homology"/>
<accession>P41291</accession>